<reference key="1">
    <citation type="journal article" date="1990" name="EMBO J.">
        <title>Molecular analysis of odd-skipped, a zinc finger encoding segmentation gene with a novel pair-rule expression pattern.</title>
        <authorList>
            <person name="Coulter D.E."/>
            <person name="Swaykus E.A."/>
            <person name="Beran-Koehn M.A."/>
            <person name="Goldberg D."/>
            <person name="Wieschaus E."/>
            <person name="Schedl P."/>
        </authorList>
    </citation>
    <scope>NUCLEOTIDE SEQUENCE [MRNA]</scope>
    <scope>FUNCTION</scope>
    <scope>TISSUE SPECIFICITY</scope>
</reference>
<reference key="2">
    <citation type="journal article" date="2000" name="Science">
        <title>The genome sequence of Drosophila melanogaster.</title>
        <authorList>
            <person name="Adams M.D."/>
            <person name="Celniker S.E."/>
            <person name="Holt R.A."/>
            <person name="Evans C.A."/>
            <person name="Gocayne J.D."/>
            <person name="Amanatides P.G."/>
            <person name="Scherer S.E."/>
            <person name="Li P.W."/>
            <person name="Hoskins R.A."/>
            <person name="Galle R.F."/>
            <person name="George R.A."/>
            <person name="Lewis S.E."/>
            <person name="Richards S."/>
            <person name="Ashburner M."/>
            <person name="Henderson S.N."/>
            <person name="Sutton G.G."/>
            <person name="Wortman J.R."/>
            <person name="Yandell M.D."/>
            <person name="Zhang Q."/>
            <person name="Chen L.X."/>
            <person name="Brandon R.C."/>
            <person name="Rogers Y.-H.C."/>
            <person name="Blazej R.G."/>
            <person name="Champe M."/>
            <person name="Pfeiffer B.D."/>
            <person name="Wan K.H."/>
            <person name="Doyle C."/>
            <person name="Baxter E.G."/>
            <person name="Helt G."/>
            <person name="Nelson C.R."/>
            <person name="Miklos G.L.G."/>
            <person name="Abril J.F."/>
            <person name="Agbayani A."/>
            <person name="An H.-J."/>
            <person name="Andrews-Pfannkoch C."/>
            <person name="Baldwin D."/>
            <person name="Ballew R.M."/>
            <person name="Basu A."/>
            <person name="Baxendale J."/>
            <person name="Bayraktaroglu L."/>
            <person name="Beasley E.M."/>
            <person name="Beeson K.Y."/>
            <person name="Benos P.V."/>
            <person name="Berman B.P."/>
            <person name="Bhandari D."/>
            <person name="Bolshakov S."/>
            <person name="Borkova D."/>
            <person name="Botchan M.R."/>
            <person name="Bouck J."/>
            <person name="Brokstein P."/>
            <person name="Brottier P."/>
            <person name="Burtis K.C."/>
            <person name="Busam D.A."/>
            <person name="Butler H."/>
            <person name="Cadieu E."/>
            <person name="Center A."/>
            <person name="Chandra I."/>
            <person name="Cherry J.M."/>
            <person name="Cawley S."/>
            <person name="Dahlke C."/>
            <person name="Davenport L.B."/>
            <person name="Davies P."/>
            <person name="de Pablos B."/>
            <person name="Delcher A."/>
            <person name="Deng Z."/>
            <person name="Mays A.D."/>
            <person name="Dew I."/>
            <person name="Dietz S.M."/>
            <person name="Dodson K."/>
            <person name="Doup L.E."/>
            <person name="Downes M."/>
            <person name="Dugan-Rocha S."/>
            <person name="Dunkov B.C."/>
            <person name="Dunn P."/>
            <person name="Durbin K.J."/>
            <person name="Evangelista C.C."/>
            <person name="Ferraz C."/>
            <person name="Ferriera S."/>
            <person name="Fleischmann W."/>
            <person name="Fosler C."/>
            <person name="Gabrielian A.E."/>
            <person name="Garg N.S."/>
            <person name="Gelbart W.M."/>
            <person name="Glasser K."/>
            <person name="Glodek A."/>
            <person name="Gong F."/>
            <person name="Gorrell J.H."/>
            <person name="Gu Z."/>
            <person name="Guan P."/>
            <person name="Harris M."/>
            <person name="Harris N.L."/>
            <person name="Harvey D.A."/>
            <person name="Heiman T.J."/>
            <person name="Hernandez J.R."/>
            <person name="Houck J."/>
            <person name="Hostin D."/>
            <person name="Houston K.A."/>
            <person name="Howland T.J."/>
            <person name="Wei M.-H."/>
            <person name="Ibegwam C."/>
            <person name="Jalali M."/>
            <person name="Kalush F."/>
            <person name="Karpen G.H."/>
            <person name="Ke Z."/>
            <person name="Kennison J.A."/>
            <person name="Ketchum K.A."/>
            <person name="Kimmel B.E."/>
            <person name="Kodira C.D."/>
            <person name="Kraft C.L."/>
            <person name="Kravitz S."/>
            <person name="Kulp D."/>
            <person name="Lai Z."/>
            <person name="Lasko P."/>
            <person name="Lei Y."/>
            <person name="Levitsky A.A."/>
            <person name="Li J.H."/>
            <person name="Li Z."/>
            <person name="Liang Y."/>
            <person name="Lin X."/>
            <person name="Liu X."/>
            <person name="Mattei B."/>
            <person name="McIntosh T.C."/>
            <person name="McLeod M.P."/>
            <person name="McPherson D."/>
            <person name="Merkulov G."/>
            <person name="Milshina N.V."/>
            <person name="Mobarry C."/>
            <person name="Morris J."/>
            <person name="Moshrefi A."/>
            <person name="Mount S.M."/>
            <person name="Moy M."/>
            <person name="Murphy B."/>
            <person name="Murphy L."/>
            <person name="Muzny D.M."/>
            <person name="Nelson D.L."/>
            <person name="Nelson D.R."/>
            <person name="Nelson K.A."/>
            <person name="Nixon K."/>
            <person name="Nusskern D.R."/>
            <person name="Pacleb J.M."/>
            <person name="Palazzolo M."/>
            <person name="Pittman G.S."/>
            <person name="Pan S."/>
            <person name="Pollard J."/>
            <person name="Puri V."/>
            <person name="Reese M.G."/>
            <person name="Reinert K."/>
            <person name="Remington K."/>
            <person name="Saunders R.D.C."/>
            <person name="Scheeler F."/>
            <person name="Shen H."/>
            <person name="Shue B.C."/>
            <person name="Siden-Kiamos I."/>
            <person name="Simpson M."/>
            <person name="Skupski M.P."/>
            <person name="Smith T.J."/>
            <person name="Spier E."/>
            <person name="Spradling A.C."/>
            <person name="Stapleton M."/>
            <person name="Strong R."/>
            <person name="Sun E."/>
            <person name="Svirskas R."/>
            <person name="Tector C."/>
            <person name="Turner R."/>
            <person name="Venter E."/>
            <person name="Wang A.H."/>
            <person name="Wang X."/>
            <person name="Wang Z.-Y."/>
            <person name="Wassarman D.A."/>
            <person name="Weinstock G.M."/>
            <person name="Weissenbach J."/>
            <person name="Williams S.M."/>
            <person name="Woodage T."/>
            <person name="Worley K.C."/>
            <person name="Wu D."/>
            <person name="Yang S."/>
            <person name="Yao Q.A."/>
            <person name="Ye J."/>
            <person name="Yeh R.-F."/>
            <person name="Zaveri J.S."/>
            <person name="Zhan M."/>
            <person name="Zhang G."/>
            <person name="Zhao Q."/>
            <person name="Zheng L."/>
            <person name="Zheng X.H."/>
            <person name="Zhong F.N."/>
            <person name="Zhong W."/>
            <person name="Zhou X."/>
            <person name="Zhu S.C."/>
            <person name="Zhu X."/>
            <person name="Smith H.O."/>
            <person name="Gibbs R.A."/>
            <person name="Myers E.W."/>
            <person name="Rubin G.M."/>
            <person name="Venter J.C."/>
        </authorList>
    </citation>
    <scope>NUCLEOTIDE SEQUENCE [LARGE SCALE GENOMIC DNA]</scope>
    <source>
        <strain>Berkeley</strain>
    </source>
</reference>
<reference key="3">
    <citation type="journal article" date="2002" name="Genome Biol.">
        <title>Annotation of the Drosophila melanogaster euchromatic genome: a systematic review.</title>
        <authorList>
            <person name="Misra S."/>
            <person name="Crosby M.A."/>
            <person name="Mungall C.J."/>
            <person name="Matthews B.B."/>
            <person name="Campbell K.S."/>
            <person name="Hradecky P."/>
            <person name="Huang Y."/>
            <person name="Kaminker J.S."/>
            <person name="Millburn G.H."/>
            <person name="Prochnik S.E."/>
            <person name="Smith C.D."/>
            <person name="Tupy J.L."/>
            <person name="Whitfield E.J."/>
            <person name="Bayraktaroglu L."/>
            <person name="Berman B.P."/>
            <person name="Bettencourt B.R."/>
            <person name="Celniker S.E."/>
            <person name="de Grey A.D.N.J."/>
            <person name="Drysdale R.A."/>
            <person name="Harris N.L."/>
            <person name="Richter J."/>
            <person name="Russo S."/>
            <person name="Schroeder A.J."/>
            <person name="Shu S.Q."/>
            <person name="Stapleton M."/>
            <person name="Yamada C."/>
            <person name="Ashburner M."/>
            <person name="Gelbart W.M."/>
            <person name="Rubin G.M."/>
            <person name="Lewis S.E."/>
        </authorList>
    </citation>
    <scope>GENOME REANNOTATION</scope>
    <source>
        <strain>Berkeley</strain>
    </source>
</reference>
<reference key="4">
    <citation type="journal article" date="2002" name="Genome Biol.">
        <title>A Drosophila full-length cDNA resource.</title>
        <authorList>
            <person name="Stapleton M."/>
            <person name="Carlson J.W."/>
            <person name="Brokstein P."/>
            <person name="Yu C."/>
            <person name="Champe M."/>
            <person name="George R.A."/>
            <person name="Guarin H."/>
            <person name="Kronmiller B."/>
            <person name="Pacleb J.M."/>
            <person name="Park S."/>
            <person name="Wan K.H."/>
            <person name="Rubin G.M."/>
            <person name="Celniker S.E."/>
        </authorList>
    </citation>
    <scope>NUCLEOTIDE SEQUENCE [LARGE SCALE MRNA]</scope>
    <source>
        <strain>Berkeley</strain>
        <tissue>Embryo</tissue>
    </source>
</reference>
<reference key="5">
    <citation type="journal article" date="1995" name="Dev. Biol.">
        <title>Establishing parasegments in Drosophila embryos: roles of the odd-skipped and naked genes.</title>
        <authorList>
            <person name="Mullen J.R."/>
            <person name="DiNardo S."/>
        </authorList>
    </citation>
    <scope>FUNCTION</scope>
</reference>
<reference key="6">
    <citation type="journal article" date="1998" name="Development">
        <title>Dynamic changes in the functions of Odd-skipped during early Drosophila embryogenesis.</title>
        <authorList>
            <person name="Saulier-Le Drean B."/>
            <person name="Nasiadka A."/>
            <person name="Dong J."/>
            <person name="Krause H.M."/>
        </authorList>
    </citation>
    <scope>FUNCTION</scope>
</reference>
<reference key="7">
    <citation type="journal article" date="2000" name="Mech. Dev.">
        <title>odd-skipped is expressed in multiple tissues during Drosophila embryogenesis.</title>
        <authorList>
            <person name="Ward E.J."/>
            <person name="Coulter D.E."/>
        </authorList>
    </citation>
    <scope>TISSUE SPECIFICITY</scope>
</reference>
<reference key="8">
    <citation type="journal article" date="2003" name="Dev. Biol.">
        <title>The odd-skipped family of zinc finger genes promotes Drosophila leg segmentation.</title>
        <authorList>
            <person name="Hao I."/>
            <person name="Green R.B."/>
            <person name="Dunaevsky O."/>
            <person name="Lengyel J.A."/>
            <person name="Rauskolb C."/>
        </authorList>
    </citation>
    <scope>FUNCTION</scope>
    <scope>TISSUE SPECIFICITY</scope>
</reference>
<proteinExistence type="evidence at transcript level"/>
<keyword id="KW-0010">Activator</keyword>
<keyword id="KW-0217">Developmental protein</keyword>
<keyword id="KW-0238">DNA-binding</keyword>
<keyword id="KW-0479">Metal-binding</keyword>
<keyword id="KW-0539">Nucleus</keyword>
<keyword id="KW-0562">Pair-rule protein</keyword>
<keyword id="KW-1185">Reference proteome</keyword>
<keyword id="KW-0677">Repeat</keyword>
<keyword id="KW-0678">Repressor</keyword>
<keyword id="KW-0804">Transcription</keyword>
<keyword id="KW-0805">Transcription regulation</keyword>
<keyword id="KW-0862">Zinc</keyword>
<keyword id="KW-0863">Zinc-finger</keyword>
<dbReference type="EMBL" id="X57480">
    <property type="protein sequence ID" value="CAA40718.1"/>
    <property type="molecule type" value="mRNA"/>
</dbReference>
<dbReference type="EMBL" id="AE014134">
    <property type="protein sequence ID" value="AAF51085.1"/>
    <property type="molecule type" value="Genomic_DNA"/>
</dbReference>
<dbReference type="EMBL" id="BT015214">
    <property type="protein sequence ID" value="AAT94443.1"/>
    <property type="molecule type" value="mRNA"/>
</dbReference>
<dbReference type="PIR" id="S11998">
    <property type="entry name" value="S11998"/>
</dbReference>
<dbReference type="RefSeq" id="NP_722922.1">
    <property type="nucleotide sequence ID" value="NM_164546.2"/>
</dbReference>
<dbReference type="SMR" id="P23803"/>
<dbReference type="BioGRID" id="59791">
    <property type="interactions" value="27"/>
</dbReference>
<dbReference type="ELM" id="P23803"/>
<dbReference type="FunCoup" id="P23803">
    <property type="interactions" value="33"/>
</dbReference>
<dbReference type="IntAct" id="P23803">
    <property type="interactions" value="8"/>
</dbReference>
<dbReference type="STRING" id="7227.FBpp0077246"/>
<dbReference type="GlyGen" id="P23803">
    <property type="glycosylation" value="1 site"/>
</dbReference>
<dbReference type="PaxDb" id="7227-FBpp0077246"/>
<dbReference type="DNASU" id="33583"/>
<dbReference type="EnsemblMetazoa" id="FBtr0077557">
    <property type="protein sequence ID" value="FBpp0077246"/>
    <property type="gene ID" value="FBgn0002985"/>
</dbReference>
<dbReference type="GeneID" id="33583"/>
<dbReference type="KEGG" id="dme:Dmel_CG3851"/>
<dbReference type="AGR" id="FB:FBgn0002985"/>
<dbReference type="CTD" id="33583"/>
<dbReference type="FlyBase" id="FBgn0002985">
    <property type="gene designation" value="odd"/>
</dbReference>
<dbReference type="VEuPathDB" id="VectorBase:FBgn0002985"/>
<dbReference type="eggNOG" id="KOG1721">
    <property type="taxonomic scope" value="Eukaryota"/>
</dbReference>
<dbReference type="HOGENOM" id="CLU_035933_1_1_1"/>
<dbReference type="InParanoid" id="P23803"/>
<dbReference type="OMA" id="MNQWIRN"/>
<dbReference type="OrthoDB" id="9451254at2759"/>
<dbReference type="PhylomeDB" id="P23803"/>
<dbReference type="SignaLink" id="P23803"/>
<dbReference type="BioGRID-ORCS" id="33583">
    <property type="hits" value="0 hits in 3 CRISPR screens"/>
</dbReference>
<dbReference type="GenomeRNAi" id="33583"/>
<dbReference type="PRO" id="PR:P23803"/>
<dbReference type="Proteomes" id="UP000000803">
    <property type="component" value="Chromosome 2L"/>
</dbReference>
<dbReference type="Bgee" id="FBgn0002985">
    <property type="expression patterns" value="Expressed in adult Malpighian tubule principal cell of lower ureter in Malpighian tubule and 93 other cell types or tissues"/>
</dbReference>
<dbReference type="GO" id="GO:0005634">
    <property type="term" value="C:nucleus"/>
    <property type="evidence" value="ECO:0000250"/>
    <property type="project" value="FlyBase"/>
</dbReference>
<dbReference type="GO" id="GO:0003677">
    <property type="term" value="F:DNA binding"/>
    <property type="evidence" value="ECO:0000303"/>
    <property type="project" value="UniProtKB"/>
</dbReference>
<dbReference type="GO" id="GO:0003700">
    <property type="term" value="F:DNA-binding transcription factor activity"/>
    <property type="evidence" value="ECO:0000250"/>
    <property type="project" value="FlyBase"/>
</dbReference>
<dbReference type="GO" id="GO:0000981">
    <property type="term" value="F:DNA-binding transcription factor activity, RNA polymerase II-specific"/>
    <property type="evidence" value="ECO:0000318"/>
    <property type="project" value="GO_Central"/>
</dbReference>
<dbReference type="GO" id="GO:0000977">
    <property type="term" value="F:RNA polymerase II transcription regulatory region sequence-specific DNA binding"/>
    <property type="evidence" value="ECO:0000318"/>
    <property type="project" value="GO_Central"/>
</dbReference>
<dbReference type="GO" id="GO:0008270">
    <property type="term" value="F:zinc ion binding"/>
    <property type="evidence" value="ECO:0007669"/>
    <property type="project" value="UniProtKB-KW"/>
</dbReference>
<dbReference type="GO" id="GO:0007350">
    <property type="term" value="P:blastoderm segmentation"/>
    <property type="evidence" value="ECO:0000315"/>
    <property type="project" value="UniProtKB"/>
</dbReference>
<dbReference type="GO" id="GO:0048619">
    <property type="term" value="P:embryonic hindgut morphogenesis"/>
    <property type="evidence" value="ECO:0000318"/>
    <property type="project" value="GO_Central"/>
</dbReference>
<dbReference type="GO" id="GO:0009880">
    <property type="term" value="P:embryonic pattern specification"/>
    <property type="evidence" value="ECO:0000318"/>
    <property type="project" value="GO_Central"/>
</dbReference>
<dbReference type="GO" id="GO:0016348">
    <property type="term" value="P:imaginal disc-derived leg joint morphogenesis"/>
    <property type="evidence" value="ECO:0000315"/>
    <property type="project" value="FlyBase"/>
</dbReference>
<dbReference type="GO" id="GO:0007443">
    <property type="term" value="P:Malpighian tubule morphogenesis"/>
    <property type="evidence" value="ECO:0000315"/>
    <property type="project" value="UniProtKB"/>
</dbReference>
<dbReference type="GO" id="GO:0045892">
    <property type="term" value="P:negative regulation of DNA-templated transcription"/>
    <property type="evidence" value="ECO:0000314"/>
    <property type="project" value="UniProtKB"/>
</dbReference>
<dbReference type="GO" id="GO:0000122">
    <property type="term" value="P:negative regulation of transcription by RNA polymerase II"/>
    <property type="evidence" value="ECO:0000314"/>
    <property type="project" value="UniProtKB"/>
</dbReference>
<dbReference type="GO" id="GO:0007389">
    <property type="term" value="P:pattern specification process"/>
    <property type="evidence" value="ECO:0000315"/>
    <property type="project" value="CACAO"/>
</dbReference>
<dbReference type="GO" id="GO:0007366">
    <property type="term" value="P:periodic partitioning by pair rule gene"/>
    <property type="evidence" value="ECO:0000315"/>
    <property type="project" value="UniProtKB"/>
</dbReference>
<dbReference type="GO" id="GO:0045893">
    <property type="term" value="P:positive regulation of DNA-templated transcription"/>
    <property type="evidence" value="ECO:0000314"/>
    <property type="project" value="UniProtKB"/>
</dbReference>
<dbReference type="GO" id="GO:0045944">
    <property type="term" value="P:positive regulation of transcription by RNA polymerase II"/>
    <property type="evidence" value="ECO:0000314"/>
    <property type="project" value="UniProtKB"/>
</dbReference>
<dbReference type="GO" id="GO:0006357">
    <property type="term" value="P:regulation of transcription by RNA polymerase II"/>
    <property type="evidence" value="ECO:0000250"/>
    <property type="project" value="FlyBase"/>
</dbReference>
<dbReference type="FunFam" id="3.30.160.60:FF:000958">
    <property type="entry name" value="Odd skipped"/>
    <property type="match status" value="1"/>
</dbReference>
<dbReference type="FunFam" id="3.30.160.60:FF:002020">
    <property type="entry name" value="Odd skipped"/>
    <property type="match status" value="1"/>
</dbReference>
<dbReference type="FunFam" id="3.30.160.60:FF:001452">
    <property type="entry name" value="Odd skipped, putative"/>
    <property type="match status" value="1"/>
</dbReference>
<dbReference type="FunFam" id="3.30.160.60:FF:000311">
    <property type="entry name" value="protein odd-skipped-related 2 isoform X1"/>
    <property type="match status" value="1"/>
</dbReference>
<dbReference type="Gene3D" id="3.30.160.60">
    <property type="entry name" value="Classic Zinc Finger"/>
    <property type="match status" value="4"/>
</dbReference>
<dbReference type="InterPro" id="IPR050717">
    <property type="entry name" value="C2H2-ZF_Transcription_Reg"/>
</dbReference>
<dbReference type="InterPro" id="IPR036236">
    <property type="entry name" value="Znf_C2H2_sf"/>
</dbReference>
<dbReference type="InterPro" id="IPR013087">
    <property type="entry name" value="Znf_C2H2_type"/>
</dbReference>
<dbReference type="PANTHER" id="PTHR14196">
    <property type="entry name" value="ODD-SKIPPED - RELATED"/>
    <property type="match status" value="1"/>
</dbReference>
<dbReference type="PANTHER" id="PTHR14196:SF13">
    <property type="entry name" value="PROTEIN ODD-SKIPPED"/>
    <property type="match status" value="1"/>
</dbReference>
<dbReference type="Pfam" id="PF00096">
    <property type="entry name" value="zf-C2H2"/>
    <property type="match status" value="4"/>
</dbReference>
<dbReference type="SMART" id="SM00355">
    <property type="entry name" value="ZnF_C2H2"/>
    <property type="match status" value="4"/>
</dbReference>
<dbReference type="SUPFAM" id="SSF57667">
    <property type="entry name" value="beta-beta-alpha zinc fingers"/>
    <property type="match status" value="2"/>
</dbReference>
<dbReference type="PROSITE" id="PS00028">
    <property type="entry name" value="ZINC_FINGER_C2H2_1"/>
    <property type="match status" value="4"/>
</dbReference>
<dbReference type="PROSITE" id="PS50157">
    <property type="entry name" value="ZINC_FINGER_C2H2_2"/>
    <property type="match status" value="4"/>
</dbReference>
<gene>
    <name type="primary">odd</name>
    <name type="ORF">CG3851</name>
</gene>
<comment type="function">
    <text evidence="4 5 6 7">Pair-rule protein that determines both the size and polarity of even-numbered as well as odd-numbered parasegments during embryogenesis. DNA-binding transcription factor that acts primarily as a transcriptional repressor but can also function as a transcriptional activator, depending on the stage of development and spatial restrictions. May function redundantly with odd and drm in leg joint formation during the larval stages, acting downstream of Notch activation.</text>
</comment>
<comment type="subcellular location">
    <subcellularLocation>
        <location evidence="8">Nucleus</location>
    </subcellularLocation>
</comment>
<comment type="tissue specificity">
    <text evidence="3 4 5">Has two temporally distinct modes of expression during early embryogenesis; expressed in seven stripes at the blastoderm stage, then during gastrulation the seven primary stripes are supplemented by secondary stripes which appear in alternate segments. This results in the labelling of every segment in the extended germ band. Also expressed in the embryo in distinct regions of the gut, the Garland cells associated with the proventriculus, the pericardial cells, the lymph glands associated with the heart, in a subset of cells in the central nervous system and in select apodemes. Expressed in a segmentally repeated pattern in the leg disk at the distal edge of each presumptive leg segment except in tarsal segments 1 to 4.</text>
</comment>
<comment type="similarity">
    <text evidence="8">Belongs to the Odd C2H2-type zinc-finger protein family.</text>
</comment>
<name>ODD_DROME</name>
<organism>
    <name type="scientific">Drosophila melanogaster</name>
    <name type="common">Fruit fly</name>
    <dbReference type="NCBI Taxonomy" id="7227"/>
    <lineage>
        <taxon>Eukaryota</taxon>
        <taxon>Metazoa</taxon>
        <taxon>Ecdysozoa</taxon>
        <taxon>Arthropoda</taxon>
        <taxon>Hexapoda</taxon>
        <taxon>Insecta</taxon>
        <taxon>Pterygota</taxon>
        <taxon>Neoptera</taxon>
        <taxon>Endopterygota</taxon>
        <taxon>Diptera</taxon>
        <taxon>Brachycera</taxon>
        <taxon>Muscomorpha</taxon>
        <taxon>Ephydroidea</taxon>
        <taxon>Drosophilidae</taxon>
        <taxon>Drosophila</taxon>
        <taxon>Sophophora</taxon>
    </lineage>
</organism>
<accession>P23803</accession>
<accession>Q9VQS9</accession>
<sequence length="392" mass="44626">MSSTSASPISNITVDDELNLSREQDFAEEDFIVIKEERETSLSPMLTPPHTPTEEPLRRVHPAISEEAVATQLHMRHMAHYQQQQQQQQQQQQHRLWLQMQQQQQQHQAPQQYPVYPTASADPVAVHQQLMNHWIRNAAIYQQQQQQQQHPHHHHHHGHPHHPHPHPHHVRPYPAGLHSLHAAVMGRHFGAMPTLKLGGAGGASGVPSGATGSSRPKKQFICKYCNRQFTKSYNLLIHERTHTDERPYSCDICGKAFRRQDHLRDHRYIHSKDKPFKCSDCGKGFCQSRTLAVHKVTHLEEGPHKCPICQRSFNQRANLKSHLQSHSEQSTKEVVVTTSPATSHSVPNQALSSPQPENLAQHLPVLDLSSSSSSSEKPKRMLGFTIDEIMSR</sequence>
<protein>
    <recommendedName>
        <fullName>Protein odd-skipped</fullName>
    </recommendedName>
</protein>
<evidence type="ECO:0000255" key="1">
    <source>
        <dbReference type="PROSITE-ProRule" id="PRU00042"/>
    </source>
</evidence>
<evidence type="ECO:0000256" key="2">
    <source>
        <dbReference type="SAM" id="MobiDB-lite"/>
    </source>
</evidence>
<evidence type="ECO:0000269" key="3">
    <source>
    </source>
</evidence>
<evidence type="ECO:0000269" key="4">
    <source>
    </source>
</evidence>
<evidence type="ECO:0000269" key="5">
    <source>
    </source>
</evidence>
<evidence type="ECO:0000269" key="6">
    <source>
    </source>
</evidence>
<evidence type="ECO:0000269" key="7">
    <source>
    </source>
</evidence>
<evidence type="ECO:0000305" key="8"/>
<feature type="chain" id="PRO_0000047003" description="Protein odd-skipped">
    <location>
        <begin position="1"/>
        <end position="392"/>
    </location>
</feature>
<feature type="zinc finger region" description="C2H2-type 1" evidence="1">
    <location>
        <begin position="220"/>
        <end position="242"/>
    </location>
</feature>
<feature type="zinc finger region" description="C2H2-type 2" evidence="1">
    <location>
        <begin position="248"/>
        <end position="270"/>
    </location>
</feature>
<feature type="zinc finger region" description="C2H2-type 3" evidence="1">
    <location>
        <begin position="276"/>
        <end position="298"/>
    </location>
</feature>
<feature type="zinc finger region" description="C2H2-type 4" evidence="1">
    <location>
        <begin position="304"/>
        <end position="326"/>
    </location>
</feature>
<feature type="region of interest" description="Disordered" evidence="2">
    <location>
        <begin position="142"/>
        <end position="174"/>
    </location>
</feature>
<feature type="region of interest" description="Disordered" evidence="2">
    <location>
        <begin position="320"/>
        <end position="356"/>
    </location>
</feature>
<feature type="compositionally biased region" description="Basic residues" evidence="2">
    <location>
        <begin position="150"/>
        <end position="171"/>
    </location>
</feature>
<feature type="compositionally biased region" description="Polar residues" evidence="2">
    <location>
        <begin position="336"/>
        <end position="356"/>
    </location>
</feature>
<feature type="sequence conflict" description="In Ref. 1; CAA40718." evidence="8" ref="1">
    <original>E</original>
    <variation>D</variation>
    <location>
        <position position="29"/>
    </location>
</feature>
<feature type="sequence conflict" description="In Ref. 1; CAA40718." evidence="8" ref="1">
    <original>M</original>
    <variation>V</variation>
    <location>
        <position position="185"/>
    </location>
</feature>
<feature type="sequence conflict" description="In Ref. 1; CAA40718." evidence="8" ref="1">
    <original>G</original>
    <variation>C</variation>
    <location>
        <position position="209"/>
    </location>
</feature>
<feature type="sequence conflict" description="In Ref. 1; CAA40718." evidence="8" ref="1">
    <original>A</original>
    <variation>V</variation>
    <location>
        <position position="360"/>
    </location>
</feature>